<dbReference type="EMBL" id="BA000018">
    <property type="protein sequence ID" value="BAB42048.1"/>
    <property type="molecule type" value="Genomic_DNA"/>
</dbReference>
<dbReference type="PIR" id="E89861">
    <property type="entry name" value="E89861"/>
</dbReference>
<dbReference type="RefSeq" id="WP_000290674.1">
    <property type="nucleotide sequence ID" value="NC_002745.2"/>
</dbReference>
<dbReference type="SMR" id="P60689"/>
<dbReference type="EnsemblBacteria" id="BAB42048">
    <property type="protein sequence ID" value="BAB42048"/>
    <property type="gene ID" value="BAB42048"/>
</dbReference>
<dbReference type="KEGG" id="sau:SA0809"/>
<dbReference type="HOGENOM" id="CLU_086615_3_2_9"/>
<dbReference type="GO" id="GO:0005886">
    <property type="term" value="C:plasma membrane"/>
    <property type="evidence" value="ECO:0007669"/>
    <property type="project" value="UniProtKB-SubCell"/>
</dbReference>
<dbReference type="GO" id="GO:0015297">
    <property type="term" value="F:antiporter activity"/>
    <property type="evidence" value="ECO:0007669"/>
    <property type="project" value="UniProtKB-KW"/>
</dbReference>
<dbReference type="GO" id="GO:0008324">
    <property type="term" value="F:monoatomic cation transmembrane transporter activity"/>
    <property type="evidence" value="ECO:0007669"/>
    <property type="project" value="InterPro"/>
</dbReference>
<dbReference type="GO" id="GO:1902600">
    <property type="term" value="P:proton transmembrane transport"/>
    <property type="evidence" value="ECO:0007669"/>
    <property type="project" value="UniProtKB-KW"/>
</dbReference>
<dbReference type="GO" id="GO:0006814">
    <property type="term" value="P:sodium ion transport"/>
    <property type="evidence" value="ECO:0007669"/>
    <property type="project" value="UniProtKB-KW"/>
</dbReference>
<dbReference type="InterPro" id="IPR004847">
    <property type="entry name" value="Antiport_suE1"/>
</dbReference>
<dbReference type="InterPro" id="IPR002758">
    <property type="entry name" value="Cation_antiport_E"/>
</dbReference>
<dbReference type="NCBIfam" id="TIGR00942">
    <property type="entry name" value="2a6301s05"/>
    <property type="match status" value="1"/>
</dbReference>
<dbReference type="NCBIfam" id="NF009291">
    <property type="entry name" value="PRK12651.1-1"/>
    <property type="match status" value="1"/>
</dbReference>
<dbReference type="PANTHER" id="PTHR34584">
    <property type="entry name" value="NA(+)/H(+) ANTIPORTER SUBUNIT E1"/>
    <property type="match status" value="1"/>
</dbReference>
<dbReference type="PANTHER" id="PTHR34584:SF1">
    <property type="entry name" value="NA(+)_H(+) ANTIPORTER SUBUNIT E1"/>
    <property type="match status" value="1"/>
</dbReference>
<dbReference type="Pfam" id="PF01899">
    <property type="entry name" value="MNHE"/>
    <property type="match status" value="1"/>
</dbReference>
<dbReference type="PIRSF" id="PIRSF019239">
    <property type="entry name" value="MrpE"/>
    <property type="match status" value="1"/>
</dbReference>
<comment type="function">
    <text evidence="1">Mnh complex is a Na(+)/H(+) antiporter involved in Na(+) excretion.</text>
</comment>
<comment type="subunit">
    <text evidence="1">May form a heterooligomeric complex that consists of seven subunits: mnhA1, mnhB1, mnhC1, mnhD1, mnhE1, mnhF1 and mnhG1.</text>
</comment>
<comment type="subcellular location">
    <subcellularLocation>
        <location evidence="3">Cell membrane</location>
        <topology evidence="3">Multi-pass membrane protein</topology>
    </subcellularLocation>
</comment>
<comment type="similarity">
    <text evidence="3">Belongs to the CPA3 antiporters (TC 2.A.63) subunit E family.</text>
</comment>
<feature type="chain" id="PRO_0000217088" description="Na(+)/H(+) antiporter subunit E1">
    <location>
        <begin position="1"/>
        <end position="159"/>
    </location>
</feature>
<feature type="transmembrane region" description="Helical" evidence="2">
    <location>
        <begin position="5"/>
        <end position="22"/>
    </location>
</feature>
<feature type="transmembrane region" description="Helical" evidence="2">
    <location>
        <begin position="27"/>
        <end position="45"/>
    </location>
</feature>
<feature type="transmembrane region" description="Helical" evidence="2">
    <location>
        <begin position="52"/>
        <end position="69"/>
    </location>
</feature>
<feature type="transmembrane region" description="Helical" evidence="2">
    <location>
        <begin position="100"/>
        <end position="122"/>
    </location>
</feature>
<evidence type="ECO:0000250" key="1"/>
<evidence type="ECO:0000255" key="2"/>
<evidence type="ECO:0000305" key="3"/>
<organism>
    <name type="scientific">Staphylococcus aureus (strain N315)</name>
    <dbReference type="NCBI Taxonomy" id="158879"/>
    <lineage>
        <taxon>Bacteria</taxon>
        <taxon>Bacillati</taxon>
        <taxon>Bacillota</taxon>
        <taxon>Bacilli</taxon>
        <taxon>Bacillales</taxon>
        <taxon>Staphylococcaceae</taxon>
        <taxon>Staphylococcus</taxon>
    </lineage>
</organism>
<gene>
    <name type="primary">mnhE1</name>
    <name type="ordered locus">SA0809</name>
</gene>
<accession>P60689</accession>
<accession>Q9ZNG2</accession>
<protein>
    <recommendedName>
        <fullName>Na(+)/H(+) antiporter subunit E1</fullName>
    </recommendedName>
    <alternativeName>
        <fullName>Mnh complex subunit E1</fullName>
    </alternativeName>
</protein>
<reference key="1">
    <citation type="journal article" date="2001" name="Lancet">
        <title>Whole genome sequencing of meticillin-resistant Staphylococcus aureus.</title>
        <authorList>
            <person name="Kuroda M."/>
            <person name="Ohta T."/>
            <person name="Uchiyama I."/>
            <person name="Baba T."/>
            <person name="Yuzawa H."/>
            <person name="Kobayashi I."/>
            <person name="Cui L."/>
            <person name="Oguchi A."/>
            <person name="Aoki K."/>
            <person name="Nagai Y."/>
            <person name="Lian J.-Q."/>
            <person name="Ito T."/>
            <person name="Kanamori M."/>
            <person name="Matsumaru H."/>
            <person name="Maruyama A."/>
            <person name="Murakami H."/>
            <person name="Hosoyama A."/>
            <person name="Mizutani-Ui Y."/>
            <person name="Takahashi N.K."/>
            <person name="Sawano T."/>
            <person name="Inoue R."/>
            <person name="Kaito C."/>
            <person name="Sekimizu K."/>
            <person name="Hirakawa H."/>
            <person name="Kuhara S."/>
            <person name="Goto S."/>
            <person name="Yabuzaki J."/>
            <person name="Kanehisa M."/>
            <person name="Yamashita A."/>
            <person name="Oshima K."/>
            <person name="Furuya K."/>
            <person name="Yoshino C."/>
            <person name="Shiba T."/>
            <person name="Hattori M."/>
            <person name="Ogasawara N."/>
            <person name="Hayashi H."/>
            <person name="Hiramatsu K."/>
        </authorList>
    </citation>
    <scope>NUCLEOTIDE SEQUENCE [LARGE SCALE GENOMIC DNA]</scope>
    <source>
        <strain>N315</strain>
    </source>
</reference>
<reference key="2">
    <citation type="submission" date="2007-10" db="UniProtKB">
        <title>Shotgun proteomic analysis of total and membrane protein extracts of S. aureus strain N315.</title>
        <authorList>
            <person name="Vaezzadeh A.R."/>
            <person name="Deshusses J."/>
            <person name="Lescuyer P."/>
            <person name="Hochstrasser D.F."/>
        </authorList>
    </citation>
    <scope>IDENTIFICATION BY MASS SPECTROMETRY [LARGE SCALE ANALYSIS]</scope>
    <source>
        <strain>N315</strain>
    </source>
</reference>
<sequence length="159" mass="18319">MAVQLVLNFIIAVFWLFVTNSYTTNNFVLGFIFGLVLVYLLHRVLPGRFYVITLYRIIKLVIIFLIELIKANFDVLKIIIKPSIKNEPGFFVYHTDLKKDWQIVLLSNLITLTPGTVVLGVSDDRTKIYIHAIDFSTKEQEVESIKTSLEKIVREVGEI</sequence>
<keyword id="KW-0050">Antiport</keyword>
<keyword id="KW-1003">Cell membrane</keyword>
<keyword id="KW-0375">Hydrogen ion transport</keyword>
<keyword id="KW-0406">Ion transport</keyword>
<keyword id="KW-0472">Membrane</keyword>
<keyword id="KW-0915">Sodium</keyword>
<keyword id="KW-0739">Sodium transport</keyword>
<keyword id="KW-0812">Transmembrane</keyword>
<keyword id="KW-1133">Transmembrane helix</keyword>
<keyword id="KW-0813">Transport</keyword>
<name>MNHE1_STAAN</name>
<proteinExistence type="evidence at protein level"/>